<evidence type="ECO:0000250" key="1"/>
<evidence type="ECO:0000250" key="2">
    <source>
        <dbReference type="UniProtKB" id="P01241"/>
    </source>
</evidence>
<evidence type="ECO:0000305" key="3"/>
<dbReference type="EMBL" id="AF052192">
    <property type="protein sequence ID" value="AAC08986.1"/>
    <property type="molecule type" value="mRNA"/>
</dbReference>
<dbReference type="SMR" id="O62754"/>
<dbReference type="OrthoDB" id="9925773at2759"/>
<dbReference type="GO" id="GO:0005615">
    <property type="term" value="C:extracellular space"/>
    <property type="evidence" value="ECO:0007669"/>
    <property type="project" value="InterPro"/>
</dbReference>
<dbReference type="GO" id="GO:0008083">
    <property type="term" value="F:growth factor activity"/>
    <property type="evidence" value="ECO:0007669"/>
    <property type="project" value="TreeGrafter"/>
</dbReference>
<dbReference type="GO" id="GO:0005131">
    <property type="term" value="F:growth hormone receptor binding"/>
    <property type="evidence" value="ECO:0007669"/>
    <property type="project" value="InterPro"/>
</dbReference>
<dbReference type="GO" id="GO:0005179">
    <property type="term" value="F:hormone activity"/>
    <property type="evidence" value="ECO:0007669"/>
    <property type="project" value="UniProtKB-KW"/>
</dbReference>
<dbReference type="GO" id="GO:0046872">
    <property type="term" value="F:metal ion binding"/>
    <property type="evidence" value="ECO:0007669"/>
    <property type="project" value="UniProtKB-KW"/>
</dbReference>
<dbReference type="GO" id="GO:0048513">
    <property type="term" value="P:animal organ development"/>
    <property type="evidence" value="ECO:0007669"/>
    <property type="project" value="TreeGrafter"/>
</dbReference>
<dbReference type="GO" id="GO:0060396">
    <property type="term" value="P:growth hormone receptor signaling pathway"/>
    <property type="evidence" value="ECO:0007669"/>
    <property type="project" value="TreeGrafter"/>
</dbReference>
<dbReference type="GO" id="GO:0045927">
    <property type="term" value="P:positive regulation of growth"/>
    <property type="evidence" value="ECO:0007669"/>
    <property type="project" value="TreeGrafter"/>
</dbReference>
<dbReference type="GO" id="GO:0046427">
    <property type="term" value="P:positive regulation of receptor signaling pathway via JAK-STAT"/>
    <property type="evidence" value="ECO:0007669"/>
    <property type="project" value="TreeGrafter"/>
</dbReference>
<dbReference type="GO" id="GO:0031667">
    <property type="term" value="P:response to nutrient levels"/>
    <property type="evidence" value="ECO:0007669"/>
    <property type="project" value="TreeGrafter"/>
</dbReference>
<dbReference type="CDD" id="cd10285">
    <property type="entry name" value="somatotropin_like"/>
    <property type="match status" value="1"/>
</dbReference>
<dbReference type="FunFam" id="1.20.1250.10:FF:000002">
    <property type="entry name" value="Growth hormone"/>
    <property type="match status" value="1"/>
</dbReference>
<dbReference type="Gene3D" id="1.20.1250.10">
    <property type="match status" value="1"/>
</dbReference>
<dbReference type="InterPro" id="IPR009079">
    <property type="entry name" value="4_helix_cytokine-like_core"/>
</dbReference>
<dbReference type="InterPro" id="IPR034975">
    <property type="entry name" value="Somatotropin"/>
</dbReference>
<dbReference type="InterPro" id="IPR001400">
    <property type="entry name" value="Somatotropin/Prolactin"/>
</dbReference>
<dbReference type="InterPro" id="IPR018116">
    <property type="entry name" value="Somatotropin_CS"/>
</dbReference>
<dbReference type="PANTHER" id="PTHR11417:SF2">
    <property type="entry name" value="SOMATOTROPIN"/>
    <property type="match status" value="1"/>
</dbReference>
<dbReference type="PANTHER" id="PTHR11417">
    <property type="entry name" value="SOMATOTROPIN,PROLACTIN"/>
    <property type="match status" value="1"/>
</dbReference>
<dbReference type="Pfam" id="PF00103">
    <property type="entry name" value="Hormone_1"/>
    <property type="match status" value="1"/>
</dbReference>
<dbReference type="PRINTS" id="PR00836">
    <property type="entry name" value="SOMATOTROPIN"/>
</dbReference>
<dbReference type="SUPFAM" id="SSF47266">
    <property type="entry name" value="4-helical cytokines"/>
    <property type="match status" value="1"/>
</dbReference>
<dbReference type="PROSITE" id="PS00266">
    <property type="entry name" value="SOMATOTROPIN_1"/>
    <property type="match status" value="1"/>
</dbReference>
<dbReference type="PROSITE" id="PS00338">
    <property type="entry name" value="SOMATOTROPIN_2"/>
    <property type="match status" value="1"/>
</dbReference>
<comment type="function">
    <text evidence="1">Plays an important role in growth control. Its major role in stimulating body growth is to stimulate the liver and other tissues to secrete IGF1. It stimulates both the differentiation and proliferation of myoblasts. It also stimulates amino acid uptake and protein synthesis in muscle and other tissues (By similarity).</text>
</comment>
<comment type="subcellular location">
    <subcellularLocation>
        <location>Secreted</location>
    </subcellularLocation>
</comment>
<comment type="similarity">
    <text evidence="3">Belongs to the somatotropin/prolactin family.</text>
</comment>
<organism>
    <name type="scientific">Trichosurus vulpecula</name>
    <name type="common">Brush-tailed possum</name>
    <dbReference type="NCBI Taxonomy" id="9337"/>
    <lineage>
        <taxon>Eukaryota</taxon>
        <taxon>Metazoa</taxon>
        <taxon>Chordata</taxon>
        <taxon>Craniata</taxon>
        <taxon>Vertebrata</taxon>
        <taxon>Euteleostomi</taxon>
        <taxon>Mammalia</taxon>
        <taxon>Metatheria</taxon>
        <taxon>Diprotodontia</taxon>
        <taxon>Phalangeridae</taxon>
        <taxon>Trichosurus</taxon>
    </lineage>
</organism>
<name>SOMA_TRIVU</name>
<accession>O62754</accession>
<gene>
    <name type="primary">GH1</name>
</gene>
<sequence>MAPGARISLLLLITFTLLGPQRSGAFPAMPLSSLFANAVLRAQHLHQLVADTYKEFERTYIPEAQRHSIQSTQTAFCFSETIPAPTGKDEAQQRSDVELLRFSLLLIQSWLSPVQFLSRVFTNSLVFGTSDRVYEKLRDLEEGIQALMQELEDGSSRGGLVLKTTYDKFDTNLRSDEALLKNYGLLSCFKKDLHKAETYLRVMKCRRFVESSCAF</sequence>
<reference key="1">
    <citation type="journal article" date="1998" name="Gen. Comp. Endocrinol.">
        <title>cDNA cloning of growth hormone from the brushtail possum (Trichosurus vulpecula).</title>
        <authorList>
            <person name="Saunders M.C."/>
            <person name="Deakin J."/>
            <person name="Harrison G.A."/>
            <person name="Curlewis J.D."/>
        </authorList>
    </citation>
    <scope>NUCLEOTIDE SEQUENCE [MRNA]</scope>
</reference>
<protein>
    <recommendedName>
        <fullName>Somatotropin</fullName>
    </recommendedName>
    <alternativeName>
        <fullName>Growth hormone</fullName>
    </alternativeName>
</protein>
<proteinExistence type="evidence at transcript level"/>
<feature type="signal peptide" evidence="1">
    <location>
        <begin position="1"/>
        <end position="25"/>
    </location>
</feature>
<feature type="chain" id="PRO_0000033002" description="Somatotropin">
    <location>
        <begin position="26"/>
        <end position="215"/>
    </location>
</feature>
<feature type="binding site" evidence="1">
    <location>
        <position position="44"/>
    </location>
    <ligand>
        <name>Zn(2+)</name>
        <dbReference type="ChEBI" id="CHEBI:29105"/>
    </ligand>
</feature>
<feature type="binding site" evidence="1">
    <location>
        <position position="197"/>
    </location>
    <ligand>
        <name>Zn(2+)</name>
        <dbReference type="ChEBI" id="CHEBI:29105"/>
    </ligand>
</feature>
<feature type="modified residue" description="Phosphoserine" evidence="2">
    <location>
        <position position="130"/>
    </location>
</feature>
<feature type="disulfide bond" evidence="1">
    <location>
        <begin position="77"/>
        <end position="188"/>
    </location>
</feature>
<feature type="disulfide bond" evidence="1">
    <location>
        <begin position="205"/>
        <end position="213"/>
    </location>
</feature>
<keyword id="KW-1015">Disulfide bond</keyword>
<keyword id="KW-0372">Hormone</keyword>
<keyword id="KW-0479">Metal-binding</keyword>
<keyword id="KW-0597">Phosphoprotein</keyword>
<keyword id="KW-0964">Secreted</keyword>
<keyword id="KW-0732">Signal</keyword>
<keyword id="KW-0862">Zinc</keyword>